<reference key="1">
    <citation type="journal article" date="2002" name="J. Biol. Chem.">
        <title>Cupiennin 1, a new family of highly basic antimicrobial peptides in the venom of the spider Cupiennius salei (Ctenidae).</title>
        <authorList>
            <person name="Kuhn-Nentwig L."/>
            <person name="Mueller J."/>
            <person name="Schaller J."/>
            <person name="Walz A."/>
            <person name="Dathe M."/>
            <person name="Nentwig W."/>
        </authorList>
    </citation>
    <scope>PROTEIN SEQUENCE</scope>
    <scope>SYNTHESIS</scope>
    <scope>FUNCTION</scope>
    <scope>MASS SPECTROMETRY</scope>
    <scope>TOXIC DOSE</scope>
    <scope>AMIDATION AT GLU-35</scope>
    <source>
        <tissue>Venom</tissue>
    </source>
</reference>
<reference key="2">
    <citation type="journal article" date="2000" name="Toxicon">
        <title>Characterisation of antibacterial activity of peptides isolated from the venom of the spider Cupiennius salei (Araneae: Ctenidae).</title>
        <authorList>
            <person name="Haeberli S."/>
            <person name="Kuhn-Nentwig L."/>
            <person name="Schaller J."/>
            <person name="Nentwig W."/>
        </authorList>
    </citation>
    <scope>FUNCTION</scope>
    <scope>MASS SPECTROMETRY</scope>
    <source>
        <tissue>Venom</tissue>
    </source>
</reference>
<feature type="peptide" id="PRO_0000045041" description="Cupiennin-1d">
    <location>
        <begin position="1"/>
        <end position="35"/>
    </location>
</feature>
<feature type="modified residue" description="Glutamic acid 1-amide" evidence="2">
    <location>
        <position position="35"/>
    </location>
</feature>
<sequence length="35" mass="3797">GFGSLFKFLAKKVAKTVAKQAAKQGAKYVANKHME</sequence>
<comment type="function">
    <text evidence="1 2 3">Has antimicrobial activity against B.subtilis, E.coli, E.faecalis, P.aeruginosa, and S.aureus. Has insecticidal and hemolytic activities. Probably acts by disturbing membrane function with its amphipathic structure.</text>
</comment>
<comment type="subcellular location">
    <subcellularLocation>
        <location evidence="4">Secreted</location>
    </subcellularLocation>
</comment>
<comment type="tissue specificity">
    <text evidence="4">Expressed by the venom gland.</text>
</comment>
<comment type="mass spectrometry" mass="3795.13" error="0.79" method="Electrospray" evidence="2"/>
<comment type="mass spectrometry" mass="3794.89" method="Electrospray" evidence="1"/>
<comment type="toxic dose">
    <text evidence="2">LD(50) is 6.4 pmol/mg on Drosophila.</text>
</comment>
<comment type="similarity">
    <text evidence="4">Belongs to the cationic peptide 04 (cupiennin) family. 01 subfamily.</text>
</comment>
<dbReference type="SMR" id="P83622"/>
<dbReference type="ArachnoServer" id="AS000293">
    <property type="toxin name" value="M-ctenitoxin-Cs1d"/>
</dbReference>
<dbReference type="GO" id="GO:0005576">
    <property type="term" value="C:extracellular region"/>
    <property type="evidence" value="ECO:0007669"/>
    <property type="project" value="UniProtKB-SubCell"/>
</dbReference>
<dbReference type="GO" id="GO:0090729">
    <property type="term" value="F:toxin activity"/>
    <property type="evidence" value="ECO:0007669"/>
    <property type="project" value="UniProtKB-KW"/>
</dbReference>
<dbReference type="GO" id="GO:0042742">
    <property type="term" value="P:defense response to bacterium"/>
    <property type="evidence" value="ECO:0007669"/>
    <property type="project" value="UniProtKB-KW"/>
</dbReference>
<dbReference type="GO" id="GO:0031640">
    <property type="term" value="P:killing of cells of another organism"/>
    <property type="evidence" value="ECO:0007669"/>
    <property type="project" value="UniProtKB-KW"/>
</dbReference>
<dbReference type="InterPro" id="IPR035164">
    <property type="entry name" value="Cupiennin"/>
</dbReference>
<dbReference type="Pfam" id="PF17563">
    <property type="entry name" value="Cu"/>
    <property type="match status" value="1"/>
</dbReference>
<evidence type="ECO:0000269" key="1">
    <source>
    </source>
</evidence>
<evidence type="ECO:0000269" key="2">
    <source>
    </source>
</evidence>
<evidence type="ECO:0000303" key="3">
    <source>
    </source>
</evidence>
<evidence type="ECO:0000305" key="4"/>
<protein>
    <recommendedName>
        <fullName evidence="3">Cupiennin-1d</fullName>
        <shortName evidence="4">Cu-1d</shortName>
    </recommendedName>
    <alternativeName>
        <fullName>M-ctenitoxin-Cs1d</fullName>
        <shortName>M-CNTX-Cs1d</shortName>
    </alternativeName>
</protein>
<organism>
    <name type="scientific">Cupiennius salei</name>
    <name type="common">American wandering spider</name>
    <dbReference type="NCBI Taxonomy" id="6928"/>
    <lineage>
        <taxon>Eukaryota</taxon>
        <taxon>Metazoa</taxon>
        <taxon>Ecdysozoa</taxon>
        <taxon>Arthropoda</taxon>
        <taxon>Chelicerata</taxon>
        <taxon>Arachnida</taxon>
        <taxon>Araneae</taxon>
        <taxon>Araneomorphae</taxon>
        <taxon>Entelegynae</taxon>
        <taxon>Lycosoidea</taxon>
        <taxon>Ctenidae</taxon>
        <taxon>Cupiennius</taxon>
    </lineage>
</organism>
<proteinExistence type="evidence at protein level"/>
<name>TXC1D_CUPSA</name>
<keyword id="KW-0027">Amidation</keyword>
<keyword id="KW-0044">Antibiotic</keyword>
<keyword id="KW-0929">Antimicrobial</keyword>
<keyword id="KW-0204">Cytolysis</keyword>
<keyword id="KW-0903">Direct protein sequencing</keyword>
<keyword id="KW-0354">Hemolysis</keyword>
<keyword id="KW-0528">Neurotoxin</keyword>
<keyword id="KW-0964">Secreted</keyword>
<keyword id="KW-0800">Toxin</keyword>
<accession>P83622</accession>